<sequence length="589" mass="65964">MTVQTKTKGLAWQEKPLSDNERLKTESNFLRGTILDDLKDPLTGGFKGDNFQLIRFHGMYEQDDRDIRAERAEAKLEPLKFMLLRCRLPGGIIKPSQWIELDKFARENSHYRSIRLTNRQTFQFHGVPKAKLQTMHRLLHKLGLDSIATAADMNRNVLCTSNPIESELHRQAYEYAKKISEHLLPRTRGYLDVWVDGKKVQSSDDFLQEDEPILGKTYLPRKFKTAVVIPPLNDVDCYGNDLDFVAVSDGNGQLAGFNVLAGGGLSMEHGNTKTYPNISLELGFVPPEHALKAAEAVVTTQRDFGNRSDRKNARTRYTIQNMGLDNFRAEVERRMGMPFEPIRPFKFTGRGDRIGWVKGIDGNWHLTLFIESGRLVDEGGKQLLTGVLEIAKIHKGDFRITANQNLIVANVAEADKAKIEELARTYGLIRNDVSKLRENAMSCVSFPTCPLAMAEAERVLPDFIGELDKIMAKHGTSDDYIVTRITGCPNGCGRAMLAEIGLVGKAVGRYNLHIGGDREGVRIPRLYKENITLPEILSELDDLIGKWAAGRDTDEGFGDFAIRTGIVKPVLDAPVDFWDASKAVPIARA</sequence>
<keyword id="KW-0004">4Fe-4S</keyword>
<keyword id="KW-0028">Amino-acid biosynthesis</keyword>
<keyword id="KW-0198">Cysteine biosynthesis</keyword>
<keyword id="KW-0349">Heme</keyword>
<keyword id="KW-0408">Iron</keyword>
<keyword id="KW-0411">Iron-sulfur</keyword>
<keyword id="KW-0479">Metal-binding</keyword>
<keyword id="KW-0521">NADP</keyword>
<keyword id="KW-0560">Oxidoreductase</keyword>
<protein>
    <recommendedName>
        <fullName evidence="1">Sulfite reductase [NADPH] hemoprotein beta-component</fullName>
        <shortName evidence="1">SiR-HP</shortName>
        <shortName evidence="1">SiRHP</shortName>
        <ecNumber evidence="1">1.8.1.2</ecNumber>
    </recommendedName>
</protein>
<comment type="function">
    <text evidence="1">Component of the sulfite reductase complex that catalyzes the 6-electron reduction of sulfite to sulfide. This is one of several activities required for the biosynthesis of L-cysteine from sulfate.</text>
</comment>
<comment type="catalytic activity">
    <reaction evidence="1">
        <text>hydrogen sulfide + 3 NADP(+) + 3 H2O = sulfite + 3 NADPH + 4 H(+)</text>
        <dbReference type="Rhea" id="RHEA:13801"/>
        <dbReference type="ChEBI" id="CHEBI:15377"/>
        <dbReference type="ChEBI" id="CHEBI:15378"/>
        <dbReference type="ChEBI" id="CHEBI:17359"/>
        <dbReference type="ChEBI" id="CHEBI:29919"/>
        <dbReference type="ChEBI" id="CHEBI:57783"/>
        <dbReference type="ChEBI" id="CHEBI:58349"/>
        <dbReference type="EC" id="1.8.1.2"/>
    </reaction>
</comment>
<comment type="cofactor">
    <cofactor evidence="1">
        <name>siroheme</name>
        <dbReference type="ChEBI" id="CHEBI:60052"/>
    </cofactor>
    <text evidence="1">Binds 1 siroheme per subunit.</text>
</comment>
<comment type="cofactor">
    <cofactor evidence="1">
        <name>[4Fe-4S] cluster</name>
        <dbReference type="ChEBI" id="CHEBI:49883"/>
    </cofactor>
    <text evidence="1">Binds 1 [4Fe-4S] cluster per subunit.</text>
</comment>
<comment type="pathway">
    <text evidence="1">Sulfur metabolism; hydrogen sulfide biosynthesis; hydrogen sulfide from sulfite (NADPH route): step 1/1.</text>
</comment>
<comment type="subunit">
    <text evidence="1">Alpha(8)-beta(8). The alpha component is a flavoprotein, the beta component is a hemoprotein.</text>
</comment>
<comment type="similarity">
    <text evidence="1">Belongs to the nitrite and sulfite reductase 4Fe-4S domain family.</text>
</comment>
<accession>A1KU05</accession>
<name>CYSI_NEIMF</name>
<dbReference type="EC" id="1.8.1.2" evidence="1"/>
<dbReference type="EMBL" id="AM421808">
    <property type="protein sequence ID" value="CAM10346.1"/>
    <property type="molecule type" value="Genomic_DNA"/>
</dbReference>
<dbReference type="RefSeq" id="WP_002224541.1">
    <property type="nucleotide sequence ID" value="NC_008767.1"/>
</dbReference>
<dbReference type="SMR" id="A1KU05"/>
<dbReference type="KEGG" id="nmc:NMC1091"/>
<dbReference type="HOGENOM" id="CLU_001975_3_2_4"/>
<dbReference type="UniPathway" id="UPA00140">
    <property type="reaction ID" value="UER00207"/>
</dbReference>
<dbReference type="Proteomes" id="UP000002286">
    <property type="component" value="Chromosome"/>
</dbReference>
<dbReference type="GO" id="GO:0009337">
    <property type="term" value="C:sulfite reductase complex (NADPH)"/>
    <property type="evidence" value="ECO:0007669"/>
    <property type="project" value="InterPro"/>
</dbReference>
<dbReference type="GO" id="GO:0051539">
    <property type="term" value="F:4 iron, 4 sulfur cluster binding"/>
    <property type="evidence" value="ECO:0007669"/>
    <property type="project" value="UniProtKB-KW"/>
</dbReference>
<dbReference type="GO" id="GO:0020037">
    <property type="term" value="F:heme binding"/>
    <property type="evidence" value="ECO:0007669"/>
    <property type="project" value="InterPro"/>
</dbReference>
<dbReference type="GO" id="GO:0046872">
    <property type="term" value="F:metal ion binding"/>
    <property type="evidence" value="ECO:0007669"/>
    <property type="project" value="UniProtKB-KW"/>
</dbReference>
<dbReference type="GO" id="GO:0050661">
    <property type="term" value="F:NADP binding"/>
    <property type="evidence" value="ECO:0007669"/>
    <property type="project" value="InterPro"/>
</dbReference>
<dbReference type="GO" id="GO:0050311">
    <property type="term" value="F:sulfite reductase (ferredoxin) activity"/>
    <property type="evidence" value="ECO:0007669"/>
    <property type="project" value="TreeGrafter"/>
</dbReference>
<dbReference type="GO" id="GO:0004783">
    <property type="term" value="F:sulfite reductase (NADPH) activity"/>
    <property type="evidence" value="ECO:0007669"/>
    <property type="project" value="UniProtKB-UniRule"/>
</dbReference>
<dbReference type="GO" id="GO:0019344">
    <property type="term" value="P:cysteine biosynthetic process"/>
    <property type="evidence" value="ECO:0007669"/>
    <property type="project" value="UniProtKB-KW"/>
</dbReference>
<dbReference type="GO" id="GO:0070814">
    <property type="term" value="P:hydrogen sulfide biosynthetic process"/>
    <property type="evidence" value="ECO:0007669"/>
    <property type="project" value="UniProtKB-UniRule"/>
</dbReference>
<dbReference type="GO" id="GO:0000103">
    <property type="term" value="P:sulfate assimilation"/>
    <property type="evidence" value="ECO:0007669"/>
    <property type="project" value="UniProtKB-UniRule"/>
</dbReference>
<dbReference type="FunFam" id="3.30.413.10:FF:000003">
    <property type="entry name" value="Sulfite reductase [NADPH] hemoprotein beta-component"/>
    <property type="match status" value="1"/>
</dbReference>
<dbReference type="FunFam" id="3.30.413.10:FF:000004">
    <property type="entry name" value="Sulfite reductase [NADPH] hemoprotein beta-component"/>
    <property type="match status" value="1"/>
</dbReference>
<dbReference type="Gene3D" id="3.30.413.10">
    <property type="entry name" value="Sulfite Reductase Hemoprotein, domain 1"/>
    <property type="match status" value="2"/>
</dbReference>
<dbReference type="HAMAP" id="MF_01540">
    <property type="entry name" value="CysI"/>
    <property type="match status" value="1"/>
</dbReference>
<dbReference type="InterPro" id="IPR011786">
    <property type="entry name" value="CysI"/>
</dbReference>
<dbReference type="InterPro" id="IPR005117">
    <property type="entry name" value="NiRdtase/SiRdtase_haem-b_fer"/>
</dbReference>
<dbReference type="InterPro" id="IPR036136">
    <property type="entry name" value="Nit/Sulf_reduc_fer-like_dom_sf"/>
</dbReference>
<dbReference type="InterPro" id="IPR006067">
    <property type="entry name" value="NO2/SO3_Rdtase_4Fe4S_dom"/>
</dbReference>
<dbReference type="InterPro" id="IPR045169">
    <property type="entry name" value="NO2/SO3_Rdtase_4Fe4S_prot"/>
</dbReference>
<dbReference type="InterPro" id="IPR045854">
    <property type="entry name" value="NO2/SO3_Rdtase_4Fe4S_sf"/>
</dbReference>
<dbReference type="InterPro" id="IPR006066">
    <property type="entry name" value="NO2/SO3_Rdtase_FeS/sirohaem_BS"/>
</dbReference>
<dbReference type="NCBIfam" id="TIGR02041">
    <property type="entry name" value="CysI"/>
    <property type="match status" value="1"/>
</dbReference>
<dbReference type="NCBIfam" id="NF010029">
    <property type="entry name" value="PRK13504.1"/>
    <property type="match status" value="1"/>
</dbReference>
<dbReference type="PANTHER" id="PTHR11493:SF47">
    <property type="entry name" value="SULFITE REDUCTASE [NADPH] SUBUNIT BETA"/>
    <property type="match status" value="1"/>
</dbReference>
<dbReference type="PANTHER" id="PTHR11493">
    <property type="entry name" value="SULFITE REDUCTASE [NADPH] SUBUNIT BETA-RELATED"/>
    <property type="match status" value="1"/>
</dbReference>
<dbReference type="Pfam" id="PF01077">
    <property type="entry name" value="NIR_SIR"/>
    <property type="match status" value="1"/>
</dbReference>
<dbReference type="Pfam" id="PF03460">
    <property type="entry name" value="NIR_SIR_ferr"/>
    <property type="match status" value="2"/>
</dbReference>
<dbReference type="PRINTS" id="PR00397">
    <property type="entry name" value="SIROHAEM"/>
</dbReference>
<dbReference type="SUPFAM" id="SSF56014">
    <property type="entry name" value="Nitrite and sulphite reductase 4Fe-4S domain-like"/>
    <property type="match status" value="2"/>
</dbReference>
<dbReference type="SUPFAM" id="SSF55124">
    <property type="entry name" value="Nitrite/Sulfite reductase N-terminal domain-like"/>
    <property type="match status" value="2"/>
</dbReference>
<dbReference type="PROSITE" id="PS00365">
    <property type="entry name" value="NIR_SIR"/>
    <property type="match status" value="1"/>
</dbReference>
<organism>
    <name type="scientific">Neisseria meningitidis serogroup C / serotype 2a (strain ATCC 700532 / DSM 15464 / FAM18)</name>
    <dbReference type="NCBI Taxonomy" id="272831"/>
    <lineage>
        <taxon>Bacteria</taxon>
        <taxon>Pseudomonadati</taxon>
        <taxon>Pseudomonadota</taxon>
        <taxon>Betaproteobacteria</taxon>
        <taxon>Neisseriales</taxon>
        <taxon>Neisseriaceae</taxon>
        <taxon>Neisseria</taxon>
    </lineage>
</organism>
<feature type="chain" id="PRO_1000068766" description="Sulfite reductase [NADPH] hemoprotein beta-component">
    <location>
        <begin position="1"/>
        <end position="589"/>
    </location>
</feature>
<feature type="binding site" evidence="1">
    <location>
        <position position="443"/>
    </location>
    <ligand>
        <name>[4Fe-4S] cluster</name>
        <dbReference type="ChEBI" id="CHEBI:49883"/>
    </ligand>
</feature>
<feature type="binding site" evidence="1">
    <location>
        <position position="449"/>
    </location>
    <ligand>
        <name>[4Fe-4S] cluster</name>
        <dbReference type="ChEBI" id="CHEBI:49883"/>
    </ligand>
</feature>
<feature type="binding site" evidence="1">
    <location>
        <position position="488"/>
    </location>
    <ligand>
        <name>[4Fe-4S] cluster</name>
        <dbReference type="ChEBI" id="CHEBI:49883"/>
    </ligand>
</feature>
<feature type="binding site" evidence="1">
    <location>
        <position position="492"/>
    </location>
    <ligand>
        <name>[4Fe-4S] cluster</name>
        <dbReference type="ChEBI" id="CHEBI:49883"/>
    </ligand>
</feature>
<feature type="binding site" description="axial binding residue" evidence="1">
    <location>
        <position position="492"/>
    </location>
    <ligand>
        <name>siroheme</name>
        <dbReference type="ChEBI" id="CHEBI:60052"/>
    </ligand>
    <ligandPart>
        <name>Fe</name>
        <dbReference type="ChEBI" id="CHEBI:18248"/>
    </ligandPart>
</feature>
<evidence type="ECO:0000255" key="1">
    <source>
        <dbReference type="HAMAP-Rule" id="MF_01540"/>
    </source>
</evidence>
<gene>
    <name evidence="1" type="primary">cysI</name>
    <name type="ordered locus">NMC1091</name>
</gene>
<proteinExistence type="inferred from homology"/>
<reference key="1">
    <citation type="journal article" date="2007" name="PLoS Genet.">
        <title>Meningococcal genetic variation mechanisms viewed through comparative analysis of serogroup C strain FAM18.</title>
        <authorList>
            <person name="Bentley S.D."/>
            <person name="Vernikos G.S."/>
            <person name="Snyder L.A.S."/>
            <person name="Churcher C."/>
            <person name="Arrowsmith C."/>
            <person name="Chillingworth T."/>
            <person name="Cronin A."/>
            <person name="Davis P.H."/>
            <person name="Holroyd N.E."/>
            <person name="Jagels K."/>
            <person name="Maddison M."/>
            <person name="Moule S."/>
            <person name="Rabbinowitsch E."/>
            <person name="Sharp S."/>
            <person name="Unwin L."/>
            <person name="Whitehead S."/>
            <person name="Quail M.A."/>
            <person name="Achtman M."/>
            <person name="Barrell B.G."/>
            <person name="Saunders N.J."/>
            <person name="Parkhill J."/>
        </authorList>
    </citation>
    <scope>NUCLEOTIDE SEQUENCE [LARGE SCALE GENOMIC DNA]</scope>
    <source>
        <strain>ATCC 700532 / DSM 15464 / FAM18</strain>
    </source>
</reference>